<dbReference type="EC" id="2.3.1.30"/>
<dbReference type="EMBL" id="AE001439">
    <property type="protein sequence ID" value="AAD06715.1"/>
    <property type="molecule type" value="Genomic_DNA"/>
</dbReference>
<dbReference type="PIR" id="B71845">
    <property type="entry name" value="B71845"/>
</dbReference>
<dbReference type="RefSeq" id="WP_000886349.1">
    <property type="nucleotide sequence ID" value="NZ_CP011330.1"/>
</dbReference>
<dbReference type="SMR" id="Q9ZK14"/>
<dbReference type="KEGG" id="hpj:jhp_1133"/>
<dbReference type="PATRIC" id="fig|85963.30.peg.1443"/>
<dbReference type="eggNOG" id="COG1045">
    <property type="taxonomic scope" value="Bacteria"/>
</dbReference>
<dbReference type="UniPathway" id="UPA00136">
    <property type="reaction ID" value="UER00199"/>
</dbReference>
<dbReference type="Proteomes" id="UP000000804">
    <property type="component" value="Chromosome"/>
</dbReference>
<dbReference type="GO" id="GO:0005737">
    <property type="term" value="C:cytoplasm"/>
    <property type="evidence" value="ECO:0007669"/>
    <property type="project" value="UniProtKB-SubCell"/>
</dbReference>
<dbReference type="GO" id="GO:0009001">
    <property type="term" value="F:serine O-acetyltransferase activity"/>
    <property type="evidence" value="ECO:0007669"/>
    <property type="project" value="UniProtKB-EC"/>
</dbReference>
<dbReference type="GO" id="GO:0006535">
    <property type="term" value="P:cysteine biosynthetic process from serine"/>
    <property type="evidence" value="ECO:0007669"/>
    <property type="project" value="InterPro"/>
</dbReference>
<dbReference type="CDD" id="cd03354">
    <property type="entry name" value="LbH_SAT"/>
    <property type="match status" value="1"/>
</dbReference>
<dbReference type="FunFam" id="1.10.3130.10:FF:000003">
    <property type="entry name" value="Serine acetyltransferase"/>
    <property type="match status" value="1"/>
</dbReference>
<dbReference type="FunFam" id="2.160.10.10:FF:000007">
    <property type="entry name" value="Serine acetyltransferase"/>
    <property type="match status" value="1"/>
</dbReference>
<dbReference type="Gene3D" id="2.160.10.10">
    <property type="entry name" value="Hexapeptide repeat proteins"/>
    <property type="match status" value="1"/>
</dbReference>
<dbReference type="Gene3D" id="1.10.3130.10">
    <property type="entry name" value="serine acetyltransferase, domain 1"/>
    <property type="match status" value="1"/>
</dbReference>
<dbReference type="InterPro" id="IPR001451">
    <property type="entry name" value="Hexapep"/>
</dbReference>
<dbReference type="InterPro" id="IPR018357">
    <property type="entry name" value="Hexapep_transf_CS"/>
</dbReference>
<dbReference type="InterPro" id="IPR045304">
    <property type="entry name" value="LbH_SAT"/>
</dbReference>
<dbReference type="InterPro" id="IPR042122">
    <property type="entry name" value="Ser_AcTrfase_N_sf"/>
</dbReference>
<dbReference type="InterPro" id="IPR005881">
    <property type="entry name" value="Ser_O-AcTrfase"/>
</dbReference>
<dbReference type="InterPro" id="IPR053376">
    <property type="entry name" value="Serine_acetyltransferase"/>
</dbReference>
<dbReference type="InterPro" id="IPR011004">
    <property type="entry name" value="Trimer_LpxA-like_sf"/>
</dbReference>
<dbReference type="NCBIfam" id="TIGR01172">
    <property type="entry name" value="cysE"/>
    <property type="match status" value="1"/>
</dbReference>
<dbReference type="NCBIfam" id="NF041874">
    <property type="entry name" value="EPS_EpsC"/>
    <property type="match status" value="1"/>
</dbReference>
<dbReference type="PANTHER" id="PTHR42811">
    <property type="entry name" value="SERINE ACETYLTRANSFERASE"/>
    <property type="match status" value="1"/>
</dbReference>
<dbReference type="Pfam" id="PF00132">
    <property type="entry name" value="Hexapep"/>
    <property type="match status" value="1"/>
</dbReference>
<dbReference type="PIRSF" id="PIRSF000441">
    <property type="entry name" value="CysE"/>
    <property type="match status" value="1"/>
</dbReference>
<dbReference type="SUPFAM" id="SSF51161">
    <property type="entry name" value="Trimeric LpxA-like enzymes"/>
    <property type="match status" value="1"/>
</dbReference>
<dbReference type="PROSITE" id="PS00101">
    <property type="entry name" value="HEXAPEP_TRANSFERASES"/>
    <property type="match status" value="1"/>
</dbReference>
<feature type="chain" id="PRO_0000068676" description="Serine acetyltransferase">
    <location>
        <begin position="1"/>
        <end position="171"/>
    </location>
</feature>
<organism>
    <name type="scientific">Helicobacter pylori (strain J99 / ATCC 700824)</name>
    <name type="common">Campylobacter pylori J99</name>
    <dbReference type="NCBI Taxonomy" id="85963"/>
    <lineage>
        <taxon>Bacteria</taxon>
        <taxon>Pseudomonadati</taxon>
        <taxon>Campylobacterota</taxon>
        <taxon>Epsilonproteobacteria</taxon>
        <taxon>Campylobacterales</taxon>
        <taxon>Helicobacteraceae</taxon>
        <taxon>Helicobacter</taxon>
    </lineage>
</organism>
<sequence>MLDLSYSLERVLQEDPAARNKWEVLLLYPGIHALLCYRLAHALHKRRFYFIARALSQLARFITGIEIHPGAKIGRGLFIDHGMGVVIGETTEIGDDVTIYHGVTLGGTGKFKGKRHPTLGNRVVVGAGAKVLGAICVGDDVRIGANAVVLSDLPTGSTAVGAKAKTITKDR</sequence>
<gene>
    <name type="primary">cysE</name>
    <name type="ordered locus">jhp_1133</name>
</gene>
<name>CYSE_HELPJ</name>
<protein>
    <recommendedName>
        <fullName>Serine acetyltransferase</fullName>
        <shortName>SAT</shortName>
        <ecNumber>2.3.1.30</ecNumber>
    </recommendedName>
</protein>
<keyword id="KW-0012">Acyltransferase</keyword>
<keyword id="KW-0028">Amino-acid biosynthesis</keyword>
<keyword id="KW-0198">Cysteine biosynthesis</keyword>
<keyword id="KW-0963">Cytoplasm</keyword>
<keyword id="KW-0677">Repeat</keyword>
<keyword id="KW-0808">Transferase</keyword>
<reference key="1">
    <citation type="journal article" date="1999" name="Nature">
        <title>Genomic sequence comparison of two unrelated isolates of the human gastric pathogen Helicobacter pylori.</title>
        <authorList>
            <person name="Alm R.A."/>
            <person name="Ling L.-S.L."/>
            <person name="Moir D.T."/>
            <person name="King B.L."/>
            <person name="Brown E.D."/>
            <person name="Doig P.C."/>
            <person name="Smith D.R."/>
            <person name="Noonan B."/>
            <person name="Guild B.C."/>
            <person name="deJonge B.L."/>
            <person name="Carmel G."/>
            <person name="Tummino P.J."/>
            <person name="Caruso A."/>
            <person name="Uria-Nickelsen M."/>
            <person name="Mills D.M."/>
            <person name="Ives C."/>
            <person name="Gibson R."/>
            <person name="Merberg D."/>
            <person name="Mills S.D."/>
            <person name="Jiang Q."/>
            <person name="Taylor D.E."/>
            <person name="Vovis G.F."/>
            <person name="Trust T.J."/>
        </authorList>
    </citation>
    <scope>NUCLEOTIDE SEQUENCE [LARGE SCALE GENOMIC DNA]</scope>
    <source>
        <strain>J99 / ATCC 700824</strain>
    </source>
</reference>
<comment type="catalytic activity">
    <reaction>
        <text>L-serine + acetyl-CoA = O-acetyl-L-serine + CoA</text>
        <dbReference type="Rhea" id="RHEA:24560"/>
        <dbReference type="ChEBI" id="CHEBI:33384"/>
        <dbReference type="ChEBI" id="CHEBI:57287"/>
        <dbReference type="ChEBI" id="CHEBI:57288"/>
        <dbReference type="ChEBI" id="CHEBI:58340"/>
        <dbReference type="EC" id="2.3.1.30"/>
    </reaction>
</comment>
<comment type="pathway">
    <text>Amino-acid biosynthesis; L-cysteine biosynthesis; L-cysteine from L-serine: step 1/2.</text>
</comment>
<comment type="subcellular location">
    <subcellularLocation>
        <location evidence="1">Cytoplasm</location>
    </subcellularLocation>
</comment>
<comment type="similarity">
    <text evidence="2">Belongs to the transferase hexapeptide repeat family.</text>
</comment>
<proteinExistence type="inferred from homology"/>
<evidence type="ECO:0000250" key="1"/>
<evidence type="ECO:0000305" key="2"/>
<accession>Q9ZK14</accession>